<keyword id="KW-0240">DNA-directed RNA polymerase</keyword>
<keyword id="KW-0460">Magnesium</keyword>
<keyword id="KW-0479">Metal-binding</keyword>
<keyword id="KW-0548">Nucleotidyltransferase</keyword>
<keyword id="KW-0804">Transcription</keyword>
<keyword id="KW-0808">Transferase</keyword>
<keyword id="KW-0862">Zinc</keyword>
<protein>
    <recommendedName>
        <fullName evidence="1">DNA-directed RNA polymerase subunit beta'</fullName>
        <shortName evidence="1">RNAP subunit beta'</shortName>
        <ecNumber evidence="1">2.7.7.6</ecNumber>
    </recommendedName>
    <alternativeName>
        <fullName evidence="1">RNA polymerase subunit beta'</fullName>
    </alternativeName>
    <alternativeName>
        <fullName evidence="1">Transcriptase subunit beta'</fullName>
    </alternativeName>
</protein>
<proteinExistence type="inferred from homology"/>
<sequence>MKALLDLFKQVQQEEIFDAIKIGLASPDKIRSWSFGEVKKPETINYRTFKPERDGLFCAKIFGPIKDYECLCGKYKRLKHRGVICEKCGVEVTLAKVRRERMGHIELASPVAHIWFLKSLPSRLGMVLDMTLRDIERVLYFEAYVVIDPGMTPLKARQIMTEEDYYNKVEEYGDEFRAEMGAEGVRELLRSINIDEQVETLRTELKNTGSEAKIKKYAKRLKVLEAFQRSGIKPDWMILEVLPVLPPELRPLVPLDGGRFATSDLNDLYRRVINRNNRLKRLLELKAPEIIVRNEKRMLQEAVDSLLDNGRRGKAMTGANKRPLKSLADMIKGKGGRFRQNLLGKRVDYSGRSVIVVGPTLKLHQCGLPKLMALELFKPFIFNKLEVMGVATTIKAAKKEVENQTPVVWDILEEVIREHPVMLNRAPTLHRLGIQAFEPVLIEGKAIQLHPLVCAAFNADFDGDQMAVHVPLSLEAQMEARTLMLASNNVLFPANGDPSIVPSQDIVLGLYYATREAINGKGEGLSFTGVSEVIRAYENKEVELASRVNVRITEMVRNEDTSEGAPQFVPKISLYATTVGRAILSEILPPGLPFSVLNKPLKKKEISRLINTAFRKCGLRATVVFADQLMQSGFRLATRAGISICVDDMLVPTQKETIVGDAAKKVKEYDRQYMSGLVTAQERYNNVVDIWSATSEAVGKAMMEQLSTEPVIDRDGNETRQESFNSIYMMADSGARGSAVQIRQLAGMRGLMAKPDGSIIETPITANFREGLNVLQYFISTHGARKGLADTALKTANSGYLTRRLVDVTQDLVVVEDDCGTSNGVAMKALVEGGEVVEALRDRILGRVAASDVVNPETQETLYEAGALLDETAVEDIERLGIDEVRVRTALTCETRYGLCASCYGRDLGRGSLVNVGEAVGVIAAQSIGEPGTQLTMRTFHIGGAASRAAVASSVEAKSNGTVRFTASMRYVTNAKGEQIVISRSGEALITDDIGRERERHKIPYGATLLQLDGAAIKAGTQLATWDPLTRPIITEYGGTVKFENVEEGVTVAKQIDDVTGLSTLVVIDVKRRGSQAAKSVRPQVKLLDANGDEVKIPGTEHAVQIGFQVGALITVKDGQQVQVGEVLARIPTESQKTRDITGGLPRVAELFEARSPKDAGILAEVTGTVSFGKDTKGKQRLVITDLEGNQHEFLIAKEKQVLVHDGQVVNKGEMIVDGPADPHDILRLQGIEALSRYIVDEVQDVYRLQGVKINDKHIEVIVRQMLRRVQIVDNGDTRFIPGEQVERSDMLDENDRMIAEDKRPATYDNILLGITKASLSTDSFISAASFQETTRVLTEAAIMGKRDDLRGLKENVIVGRLIPAGTGLAFHKARKAKEQSDRERFDQIAAEEAFEFGTPSAPAEEPQHPAE</sequence>
<dbReference type="EC" id="2.7.7.6" evidence="1"/>
<dbReference type="EMBL" id="CP000570">
    <property type="protein sequence ID" value="ABN83962.1"/>
    <property type="molecule type" value="Genomic_DNA"/>
</dbReference>
<dbReference type="RefSeq" id="WP_004521902.1">
    <property type="nucleotide sequence ID" value="NC_009074.1"/>
</dbReference>
<dbReference type="SMR" id="A3NEI6"/>
<dbReference type="GeneID" id="93061839"/>
<dbReference type="KEGG" id="bpd:BURPS668_3753"/>
<dbReference type="HOGENOM" id="CLU_000524_3_1_4"/>
<dbReference type="GO" id="GO:0000428">
    <property type="term" value="C:DNA-directed RNA polymerase complex"/>
    <property type="evidence" value="ECO:0007669"/>
    <property type="project" value="UniProtKB-KW"/>
</dbReference>
<dbReference type="GO" id="GO:0003677">
    <property type="term" value="F:DNA binding"/>
    <property type="evidence" value="ECO:0007669"/>
    <property type="project" value="UniProtKB-UniRule"/>
</dbReference>
<dbReference type="GO" id="GO:0003899">
    <property type="term" value="F:DNA-directed RNA polymerase activity"/>
    <property type="evidence" value="ECO:0007669"/>
    <property type="project" value="UniProtKB-UniRule"/>
</dbReference>
<dbReference type="GO" id="GO:0000287">
    <property type="term" value="F:magnesium ion binding"/>
    <property type="evidence" value="ECO:0007669"/>
    <property type="project" value="UniProtKB-UniRule"/>
</dbReference>
<dbReference type="GO" id="GO:0008270">
    <property type="term" value="F:zinc ion binding"/>
    <property type="evidence" value="ECO:0007669"/>
    <property type="project" value="UniProtKB-UniRule"/>
</dbReference>
<dbReference type="GO" id="GO:0006351">
    <property type="term" value="P:DNA-templated transcription"/>
    <property type="evidence" value="ECO:0007669"/>
    <property type="project" value="UniProtKB-UniRule"/>
</dbReference>
<dbReference type="CDD" id="cd02655">
    <property type="entry name" value="RNAP_beta'_C"/>
    <property type="match status" value="1"/>
</dbReference>
<dbReference type="CDD" id="cd01609">
    <property type="entry name" value="RNAP_beta'_N"/>
    <property type="match status" value="1"/>
</dbReference>
<dbReference type="FunFam" id="1.10.132.30:FF:000003">
    <property type="entry name" value="DNA-directed RNA polymerase subunit beta"/>
    <property type="match status" value="1"/>
</dbReference>
<dbReference type="FunFam" id="1.10.150.390:FF:000002">
    <property type="entry name" value="DNA-directed RNA polymerase subunit beta"/>
    <property type="match status" value="1"/>
</dbReference>
<dbReference type="FunFam" id="4.10.860.120:FF:000001">
    <property type="entry name" value="DNA-directed RNA polymerase subunit beta"/>
    <property type="match status" value="1"/>
</dbReference>
<dbReference type="Gene3D" id="1.10.132.30">
    <property type="match status" value="1"/>
</dbReference>
<dbReference type="Gene3D" id="1.10.150.390">
    <property type="match status" value="1"/>
</dbReference>
<dbReference type="Gene3D" id="1.10.1790.20">
    <property type="match status" value="1"/>
</dbReference>
<dbReference type="Gene3D" id="1.10.40.90">
    <property type="match status" value="1"/>
</dbReference>
<dbReference type="Gene3D" id="2.40.40.20">
    <property type="match status" value="1"/>
</dbReference>
<dbReference type="Gene3D" id="2.40.50.100">
    <property type="match status" value="3"/>
</dbReference>
<dbReference type="Gene3D" id="4.10.860.120">
    <property type="entry name" value="RNA polymerase II, clamp domain"/>
    <property type="match status" value="1"/>
</dbReference>
<dbReference type="Gene3D" id="1.10.274.100">
    <property type="entry name" value="RNA polymerase Rpb1, domain 3"/>
    <property type="match status" value="1"/>
</dbReference>
<dbReference type="HAMAP" id="MF_01322">
    <property type="entry name" value="RNApol_bact_RpoC"/>
    <property type="match status" value="1"/>
</dbReference>
<dbReference type="InterPro" id="IPR045867">
    <property type="entry name" value="DNA-dir_RpoC_beta_prime"/>
</dbReference>
<dbReference type="InterPro" id="IPR012754">
    <property type="entry name" value="DNA-dir_RpoC_beta_prime_bact"/>
</dbReference>
<dbReference type="InterPro" id="IPR000722">
    <property type="entry name" value="RNA_pol_asu"/>
</dbReference>
<dbReference type="InterPro" id="IPR006592">
    <property type="entry name" value="RNA_pol_N"/>
</dbReference>
<dbReference type="InterPro" id="IPR007080">
    <property type="entry name" value="RNA_pol_Rpb1_1"/>
</dbReference>
<dbReference type="InterPro" id="IPR007066">
    <property type="entry name" value="RNA_pol_Rpb1_3"/>
</dbReference>
<dbReference type="InterPro" id="IPR042102">
    <property type="entry name" value="RNA_pol_Rpb1_3_sf"/>
</dbReference>
<dbReference type="InterPro" id="IPR007083">
    <property type="entry name" value="RNA_pol_Rpb1_4"/>
</dbReference>
<dbReference type="InterPro" id="IPR007081">
    <property type="entry name" value="RNA_pol_Rpb1_5"/>
</dbReference>
<dbReference type="InterPro" id="IPR044893">
    <property type="entry name" value="RNA_pol_Rpb1_clamp_domain"/>
</dbReference>
<dbReference type="InterPro" id="IPR038120">
    <property type="entry name" value="Rpb1_funnel_sf"/>
</dbReference>
<dbReference type="NCBIfam" id="TIGR02386">
    <property type="entry name" value="rpoC_TIGR"/>
    <property type="match status" value="1"/>
</dbReference>
<dbReference type="PANTHER" id="PTHR19376">
    <property type="entry name" value="DNA-DIRECTED RNA POLYMERASE"/>
    <property type="match status" value="1"/>
</dbReference>
<dbReference type="PANTHER" id="PTHR19376:SF54">
    <property type="entry name" value="DNA-DIRECTED RNA POLYMERASE SUBUNIT BETA"/>
    <property type="match status" value="1"/>
</dbReference>
<dbReference type="Pfam" id="PF04997">
    <property type="entry name" value="RNA_pol_Rpb1_1"/>
    <property type="match status" value="1"/>
</dbReference>
<dbReference type="Pfam" id="PF00623">
    <property type="entry name" value="RNA_pol_Rpb1_2"/>
    <property type="match status" value="2"/>
</dbReference>
<dbReference type="Pfam" id="PF04983">
    <property type="entry name" value="RNA_pol_Rpb1_3"/>
    <property type="match status" value="1"/>
</dbReference>
<dbReference type="Pfam" id="PF05000">
    <property type="entry name" value="RNA_pol_Rpb1_4"/>
    <property type="match status" value="1"/>
</dbReference>
<dbReference type="Pfam" id="PF04998">
    <property type="entry name" value="RNA_pol_Rpb1_5"/>
    <property type="match status" value="1"/>
</dbReference>
<dbReference type="SMART" id="SM00663">
    <property type="entry name" value="RPOLA_N"/>
    <property type="match status" value="1"/>
</dbReference>
<dbReference type="SUPFAM" id="SSF64484">
    <property type="entry name" value="beta and beta-prime subunits of DNA dependent RNA-polymerase"/>
    <property type="match status" value="1"/>
</dbReference>
<gene>
    <name evidence="1" type="primary">rpoC</name>
    <name type="ordered locus">BURPS668_3753</name>
</gene>
<name>RPOC_BURP6</name>
<reference key="1">
    <citation type="journal article" date="2010" name="Genome Biol. Evol.">
        <title>Continuing evolution of Burkholderia mallei through genome reduction and large-scale rearrangements.</title>
        <authorList>
            <person name="Losada L."/>
            <person name="Ronning C.M."/>
            <person name="DeShazer D."/>
            <person name="Woods D."/>
            <person name="Fedorova N."/>
            <person name="Kim H.S."/>
            <person name="Shabalina S.A."/>
            <person name="Pearson T.R."/>
            <person name="Brinkac L."/>
            <person name="Tan P."/>
            <person name="Nandi T."/>
            <person name="Crabtree J."/>
            <person name="Badger J."/>
            <person name="Beckstrom-Sternberg S."/>
            <person name="Saqib M."/>
            <person name="Schutzer S.E."/>
            <person name="Keim P."/>
            <person name="Nierman W.C."/>
        </authorList>
    </citation>
    <scope>NUCLEOTIDE SEQUENCE [LARGE SCALE GENOMIC DNA]</scope>
    <source>
        <strain>668</strain>
    </source>
</reference>
<organism>
    <name type="scientific">Burkholderia pseudomallei (strain 668)</name>
    <dbReference type="NCBI Taxonomy" id="320373"/>
    <lineage>
        <taxon>Bacteria</taxon>
        <taxon>Pseudomonadati</taxon>
        <taxon>Pseudomonadota</taxon>
        <taxon>Betaproteobacteria</taxon>
        <taxon>Burkholderiales</taxon>
        <taxon>Burkholderiaceae</taxon>
        <taxon>Burkholderia</taxon>
        <taxon>pseudomallei group</taxon>
    </lineage>
</organism>
<feature type="chain" id="PRO_0000353316" description="DNA-directed RNA polymerase subunit beta'">
    <location>
        <begin position="1"/>
        <end position="1412"/>
    </location>
</feature>
<feature type="region of interest" description="Disordered" evidence="2">
    <location>
        <begin position="1393"/>
        <end position="1412"/>
    </location>
</feature>
<feature type="binding site" evidence="1">
    <location>
        <position position="70"/>
    </location>
    <ligand>
        <name>Zn(2+)</name>
        <dbReference type="ChEBI" id="CHEBI:29105"/>
        <label>1</label>
    </ligand>
</feature>
<feature type="binding site" evidence="1">
    <location>
        <position position="72"/>
    </location>
    <ligand>
        <name>Zn(2+)</name>
        <dbReference type="ChEBI" id="CHEBI:29105"/>
        <label>1</label>
    </ligand>
</feature>
<feature type="binding site" evidence="1">
    <location>
        <position position="85"/>
    </location>
    <ligand>
        <name>Zn(2+)</name>
        <dbReference type="ChEBI" id="CHEBI:29105"/>
        <label>1</label>
    </ligand>
</feature>
<feature type="binding site" evidence="1">
    <location>
        <position position="88"/>
    </location>
    <ligand>
        <name>Zn(2+)</name>
        <dbReference type="ChEBI" id="CHEBI:29105"/>
        <label>1</label>
    </ligand>
</feature>
<feature type="binding site" evidence="1">
    <location>
        <position position="460"/>
    </location>
    <ligand>
        <name>Mg(2+)</name>
        <dbReference type="ChEBI" id="CHEBI:18420"/>
    </ligand>
</feature>
<feature type="binding site" evidence="1">
    <location>
        <position position="462"/>
    </location>
    <ligand>
        <name>Mg(2+)</name>
        <dbReference type="ChEBI" id="CHEBI:18420"/>
    </ligand>
</feature>
<feature type="binding site" evidence="1">
    <location>
        <position position="464"/>
    </location>
    <ligand>
        <name>Mg(2+)</name>
        <dbReference type="ChEBI" id="CHEBI:18420"/>
    </ligand>
</feature>
<feature type="binding site" evidence="1">
    <location>
        <position position="819"/>
    </location>
    <ligand>
        <name>Zn(2+)</name>
        <dbReference type="ChEBI" id="CHEBI:29105"/>
        <label>2</label>
    </ligand>
</feature>
<feature type="binding site" evidence="1">
    <location>
        <position position="893"/>
    </location>
    <ligand>
        <name>Zn(2+)</name>
        <dbReference type="ChEBI" id="CHEBI:29105"/>
        <label>2</label>
    </ligand>
</feature>
<feature type="binding site" evidence="1">
    <location>
        <position position="900"/>
    </location>
    <ligand>
        <name>Zn(2+)</name>
        <dbReference type="ChEBI" id="CHEBI:29105"/>
        <label>2</label>
    </ligand>
</feature>
<feature type="binding site" evidence="1">
    <location>
        <position position="903"/>
    </location>
    <ligand>
        <name>Zn(2+)</name>
        <dbReference type="ChEBI" id="CHEBI:29105"/>
        <label>2</label>
    </ligand>
</feature>
<accession>A3NEI6</accession>
<evidence type="ECO:0000255" key="1">
    <source>
        <dbReference type="HAMAP-Rule" id="MF_01322"/>
    </source>
</evidence>
<evidence type="ECO:0000256" key="2">
    <source>
        <dbReference type="SAM" id="MobiDB-lite"/>
    </source>
</evidence>
<comment type="function">
    <text evidence="1">DNA-dependent RNA polymerase catalyzes the transcription of DNA into RNA using the four ribonucleoside triphosphates as substrates.</text>
</comment>
<comment type="catalytic activity">
    <reaction evidence="1">
        <text>RNA(n) + a ribonucleoside 5'-triphosphate = RNA(n+1) + diphosphate</text>
        <dbReference type="Rhea" id="RHEA:21248"/>
        <dbReference type="Rhea" id="RHEA-COMP:14527"/>
        <dbReference type="Rhea" id="RHEA-COMP:17342"/>
        <dbReference type="ChEBI" id="CHEBI:33019"/>
        <dbReference type="ChEBI" id="CHEBI:61557"/>
        <dbReference type="ChEBI" id="CHEBI:140395"/>
        <dbReference type="EC" id="2.7.7.6"/>
    </reaction>
</comment>
<comment type="cofactor">
    <cofactor evidence="1">
        <name>Mg(2+)</name>
        <dbReference type="ChEBI" id="CHEBI:18420"/>
    </cofactor>
    <text evidence="1">Binds 1 Mg(2+) ion per subunit.</text>
</comment>
<comment type="cofactor">
    <cofactor evidence="1">
        <name>Zn(2+)</name>
        <dbReference type="ChEBI" id="CHEBI:29105"/>
    </cofactor>
    <text evidence="1">Binds 2 Zn(2+) ions per subunit.</text>
</comment>
<comment type="subunit">
    <text evidence="1">The RNAP catalytic core consists of 2 alpha, 1 beta, 1 beta' and 1 omega subunit. When a sigma factor is associated with the core the holoenzyme is formed, which can initiate transcription.</text>
</comment>
<comment type="similarity">
    <text evidence="1">Belongs to the RNA polymerase beta' chain family.</text>
</comment>